<evidence type="ECO:0000250" key="1"/>
<evidence type="ECO:0000255" key="2">
    <source>
        <dbReference type="PROSITE-ProRule" id="PRU01251"/>
    </source>
</evidence>
<evidence type="ECO:0000305" key="3"/>
<organism>
    <name type="scientific">Rickettsia bellii (strain RML369-C)</name>
    <dbReference type="NCBI Taxonomy" id="336407"/>
    <lineage>
        <taxon>Bacteria</taxon>
        <taxon>Pseudomonadati</taxon>
        <taxon>Pseudomonadota</taxon>
        <taxon>Alphaproteobacteria</taxon>
        <taxon>Rickettsiales</taxon>
        <taxon>Rickettsiaceae</taxon>
        <taxon>Rickettsieae</taxon>
        <taxon>Rickettsia</taxon>
        <taxon>belli group</taxon>
    </lineage>
</organism>
<protein>
    <recommendedName>
        <fullName>Chaperone protein ClpB</fullName>
    </recommendedName>
</protein>
<feature type="chain" id="PRO_0000281060" description="Chaperone protein ClpB">
    <location>
        <begin position="1"/>
        <end position="858"/>
    </location>
</feature>
<feature type="domain" description="Clp R" evidence="2">
    <location>
        <begin position="3"/>
        <end position="147"/>
    </location>
</feature>
<feature type="region of interest" description="Repeat 1" evidence="2">
    <location>
        <begin position="6"/>
        <end position="71"/>
    </location>
</feature>
<feature type="region of interest" description="Repeat 2" evidence="2">
    <location>
        <begin position="84"/>
        <end position="147"/>
    </location>
</feature>
<feature type="region of interest" description="NBD1" evidence="1">
    <location>
        <begin position="160"/>
        <end position="341"/>
    </location>
</feature>
<feature type="region of interest" description="Linker" evidence="1">
    <location>
        <begin position="342"/>
        <end position="544"/>
    </location>
</feature>
<feature type="region of interest" description="NBD2" evidence="1">
    <location>
        <begin position="554"/>
        <end position="764"/>
    </location>
</feature>
<feature type="region of interest" description="C-terminal" evidence="1">
    <location>
        <begin position="765"/>
        <end position="858"/>
    </location>
</feature>
<feature type="coiled-coil region" evidence="1">
    <location>
        <begin position="392"/>
        <end position="523"/>
    </location>
</feature>
<feature type="binding site" evidence="1">
    <location>
        <begin position="207"/>
        <end position="214"/>
    </location>
    <ligand>
        <name>ATP</name>
        <dbReference type="ChEBI" id="CHEBI:30616"/>
        <label>1</label>
    </ligand>
</feature>
<feature type="binding site" evidence="1">
    <location>
        <begin position="604"/>
        <end position="611"/>
    </location>
    <ligand>
        <name>ATP</name>
        <dbReference type="ChEBI" id="CHEBI:30616"/>
        <label>2</label>
    </ligand>
</feature>
<keyword id="KW-0067">ATP-binding</keyword>
<keyword id="KW-0143">Chaperone</keyword>
<keyword id="KW-0175">Coiled coil</keyword>
<keyword id="KW-0963">Cytoplasm</keyword>
<keyword id="KW-0547">Nucleotide-binding</keyword>
<keyword id="KW-0677">Repeat</keyword>
<keyword id="KW-0346">Stress response</keyword>
<dbReference type="EMBL" id="CP000087">
    <property type="protein sequence ID" value="ABE05453.1"/>
    <property type="molecule type" value="Genomic_DNA"/>
</dbReference>
<dbReference type="RefSeq" id="WP_011478022.1">
    <property type="nucleotide sequence ID" value="NC_007940.1"/>
</dbReference>
<dbReference type="SMR" id="Q1RGR1"/>
<dbReference type="KEGG" id="rbe:RBE_1372"/>
<dbReference type="eggNOG" id="COG0542">
    <property type="taxonomic scope" value="Bacteria"/>
</dbReference>
<dbReference type="HOGENOM" id="CLU_005070_4_1_5"/>
<dbReference type="OrthoDB" id="9803641at2"/>
<dbReference type="Proteomes" id="UP000001951">
    <property type="component" value="Chromosome"/>
</dbReference>
<dbReference type="GO" id="GO:0005737">
    <property type="term" value="C:cytoplasm"/>
    <property type="evidence" value="ECO:0007669"/>
    <property type="project" value="UniProtKB-SubCell"/>
</dbReference>
<dbReference type="GO" id="GO:0005524">
    <property type="term" value="F:ATP binding"/>
    <property type="evidence" value="ECO:0007669"/>
    <property type="project" value="UniProtKB-KW"/>
</dbReference>
<dbReference type="GO" id="GO:0016887">
    <property type="term" value="F:ATP hydrolysis activity"/>
    <property type="evidence" value="ECO:0007669"/>
    <property type="project" value="InterPro"/>
</dbReference>
<dbReference type="GO" id="GO:0034605">
    <property type="term" value="P:cellular response to heat"/>
    <property type="evidence" value="ECO:0007669"/>
    <property type="project" value="TreeGrafter"/>
</dbReference>
<dbReference type="GO" id="GO:0042026">
    <property type="term" value="P:protein refolding"/>
    <property type="evidence" value="ECO:0007669"/>
    <property type="project" value="InterPro"/>
</dbReference>
<dbReference type="CDD" id="cd00009">
    <property type="entry name" value="AAA"/>
    <property type="match status" value="1"/>
</dbReference>
<dbReference type="CDD" id="cd19499">
    <property type="entry name" value="RecA-like_ClpB_Hsp104-like"/>
    <property type="match status" value="1"/>
</dbReference>
<dbReference type="FunFam" id="3.40.50.300:FF:000120">
    <property type="entry name" value="ATP-dependent chaperone ClpB"/>
    <property type="match status" value="1"/>
</dbReference>
<dbReference type="FunFam" id="3.40.50.300:FF:000025">
    <property type="entry name" value="ATP-dependent Clp protease subunit"/>
    <property type="match status" value="1"/>
</dbReference>
<dbReference type="FunFam" id="3.40.50.300:FF:000010">
    <property type="entry name" value="Chaperone clpB 1, putative"/>
    <property type="match status" value="1"/>
</dbReference>
<dbReference type="Gene3D" id="1.10.8.60">
    <property type="match status" value="1"/>
</dbReference>
<dbReference type="Gene3D" id="1.10.1780.10">
    <property type="entry name" value="Clp, N-terminal domain"/>
    <property type="match status" value="1"/>
</dbReference>
<dbReference type="Gene3D" id="3.40.50.300">
    <property type="entry name" value="P-loop containing nucleotide triphosphate hydrolases"/>
    <property type="match status" value="3"/>
</dbReference>
<dbReference type="InterPro" id="IPR003593">
    <property type="entry name" value="AAA+_ATPase"/>
</dbReference>
<dbReference type="InterPro" id="IPR003959">
    <property type="entry name" value="ATPase_AAA_core"/>
</dbReference>
<dbReference type="InterPro" id="IPR017730">
    <property type="entry name" value="Chaperonin_ClpB"/>
</dbReference>
<dbReference type="InterPro" id="IPR019489">
    <property type="entry name" value="Clp_ATPase_C"/>
</dbReference>
<dbReference type="InterPro" id="IPR036628">
    <property type="entry name" value="Clp_N_dom_sf"/>
</dbReference>
<dbReference type="InterPro" id="IPR004176">
    <property type="entry name" value="Clp_R_dom"/>
</dbReference>
<dbReference type="InterPro" id="IPR001270">
    <property type="entry name" value="ClpA/B"/>
</dbReference>
<dbReference type="InterPro" id="IPR018368">
    <property type="entry name" value="ClpA/B_CS1"/>
</dbReference>
<dbReference type="InterPro" id="IPR028299">
    <property type="entry name" value="ClpA/B_CS2"/>
</dbReference>
<dbReference type="InterPro" id="IPR041546">
    <property type="entry name" value="ClpA/ClpB_AAA_lid"/>
</dbReference>
<dbReference type="InterPro" id="IPR050130">
    <property type="entry name" value="ClpA_ClpB"/>
</dbReference>
<dbReference type="InterPro" id="IPR027417">
    <property type="entry name" value="P-loop_NTPase"/>
</dbReference>
<dbReference type="NCBIfam" id="TIGR03346">
    <property type="entry name" value="chaperone_ClpB"/>
    <property type="match status" value="1"/>
</dbReference>
<dbReference type="PANTHER" id="PTHR11638">
    <property type="entry name" value="ATP-DEPENDENT CLP PROTEASE"/>
    <property type="match status" value="1"/>
</dbReference>
<dbReference type="PANTHER" id="PTHR11638:SF18">
    <property type="entry name" value="HEAT SHOCK PROTEIN 104"/>
    <property type="match status" value="1"/>
</dbReference>
<dbReference type="Pfam" id="PF00004">
    <property type="entry name" value="AAA"/>
    <property type="match status" value="1"/>
</dbReference>
<dbReference type="Pfam" id="PF07724">
    <property type="entry name" value="AAA_2"/>
    <property type="match status" value="1"/>
</dbReference>
<dbReference type="Pfam" id="PF17871">
    <property type="entry name" value="AAA_lid_9"/>
    <property type="match status" value="1"/>
</dbReference>
<dbReference type="Pfam" id="PF02861">
    <property type="entry name" value="Clp_N"/>
    <property type="match status" value="2"/>
</dbReference>
<dbReference type="Pfam" id="PF10431">
    <property type="entry name" value="ClpB_D2-small"/>
    <property type="match status" value="1"/>
</dbReference>
<dbReference type="PRINTS" id="PR00300">
    <property type="entry name" value="CLPPROTEASEA"/>
</dbReference>
<dbReference type="SMART" id="SM00382">
    <property type="entry name" value="AAA"/>
    <property type="match status" value="2"/>
</dbReference>
<dbReference type="SMART" id="SM01086">
    <property type="entry name" value="ClpB_D2-small"/>
    <property type="match status" value="1"/>
</dbReference>
<dbReference type="SUPFAM" id="SSF81923">
    <property type="entry name" value="Double Clp-N motif"/>
    <property type="match status" value="1"/>
</dbReference>
<dbReference type="SUPFAM" id="SSF52540">
    <property type="entry name" value="P-loop containing nucleoside triphosphate hydrolases"/>
    <property type="match status" value="2"/>
</dbReference>
<dbReference type="PROSITE" id="PS51903">
    <property type="entry name" value="CLP_R"/>
    <property type="match status" value="1"/>
</dbReference>
<dbReference type="PROSITE" id="PS00870">
    <property type="entry name" value="CLPAB_1"/>
    <property type="match status" value="1"/>
</dbReference>
<dbReference type="PROSITE" id="PS00871">
    <property type="entry name" value="CLPAB_2"/>
    <property type="match status" value="1"/>
</dbReference>
<proteinExistence type="inferred from homology"/>
<sequence length="858" mass="95940">MNIDKFTAHAKSAITNCQHIAAKNDHQQILPLHLLASLFNEDTGIIRTLINNSGGNLNILADQVQVELNKIPKVQVDGGGTIYSSAELLKVLQRADDLAKNNGDSFVTIERILEALSFDNTIAGKILTNNGISSKKLAASILQLRKGKKADTESAENSYDALKKYGRDVTELAESGKLDPIIGRDEEIRRTVQVLSRRMKNNPVLIGEPGVGKTAIIEGLAQRIFSKDVPETLINCRIIELDMGALIAGAKYRGEFEERLKAVLGEIKESSGEIILFIDELHLLVGTGKTDGAMDASNLLKPMLARGELHCIGATTLDEYRKYIEKDAAFARRFQPVYVSEPTVEDTISILRGIKEKYELHHAVRISDSAIVAAATLSNRYITDRFLPDKAIDLIDEACSRMKIELSSKPEELDELDRRIIQIKIELAALKKESDEHSKKKIEHLTAELEKLESNSYDMSSKWQAEKSKIQGQQKLKEELDRARIDLERAERDANLAKASELKYGIIPEIMKKIQETENADSKGLLKEIVSESDIASIISRITGIPIDTMLSSERERLLVMEQKLRESVIGQDEAIKSVSDAVRRSRAGIQDINRPLGSFLFLGPTGVGKTELTKALAGFLFDDRNAILRIDMSEYMEKHAISRLIGAPPGYVGYDQGGVLTEAVRRRPYQVILFDEVEKAHPDIFNIMLQILDEGRLTDSQGITVDFKNTIIVLTSNLGAEILVNQKEGEDTYKVKDQVMEYVKMVFKPEFLNRLDEIILFHRLNQSNIHDIVKIQLEGLKKILSAQNIILEFDEPALNYLAEKGYDPSFGARPLKRLIQREIQNNLAKMILAGEVSSGKIVKITAKKEELKIQIID</sequence>
<comment type="function">
    <text evidence="1">Part of a stress-induced multi-chaperone system, it is involved in the recovery of the cell from heat-induced damage, in cooperation with DnaK, DnaJ and GrpE. Acts before DnaK, in the processing of protein aggregates. Protein binding stimulates the ATPase activity; ATP hydrolysis unfolds the denatured protein aggregates, which probably helps expose new hydrophobic binding sites on the surface of ClpB-bound aggregates, contributing to the solubilization and refolding of denatured protein aggregates by DnaK (By similarity).</text>
</comment>
<comment type="subunit">
    <text evidence="1">Homohexamer. The oligomerization is ATP-dependent (By similarity).</text>
</comment>
<comment type="subcellular location">
    <subcellularLocation>
        <location evidence="3">Cytoplasm</location>
    </subcellularLocation>
</comment>
<comment type="domain">
    <text evidence="1">The Clp repeat (R) domain probably functions as a substrate-discriminating domain, recruiting aggregated proteins to the ClpB hexamer and/or stabilizing bound proteins. The NBD2 domain is responsible for oligomerization, whereas the NBD1 domain stabilizes the hexamer probably in an ATP-dependent manner. The movement of the coiled-coil domain is essential for ClpB ability to rescue proteins from an aggregated state, probably by pulling apart large aggregated proteins, which are bound between the coiled-coils motifs of adjacent ClpB subunits in the functional hexamer (By similarity).</text>
</comment>
<comment type="similarity">
    <text evidence="3">Belongs to the ClpA/ClpB family.</text>
</comment>
<name>CLPB_RICBR</name>
<gene>
    <name type="primary">clpB</name>
    <name type="ordered locus">RBE_1372</name>
</gene>
<reference key="1">
    <citation type="journal article" date="2006" name="PLoS Genet.">
        <title>Genome sequence of Rickettsia bellii illuminates the role of amoebae in gene exchanges between intracellular pathogens.</title>
        <authorList>
            <person name="Ogata H."/>
            <person name="La Scola B."/>
            <person name="Audic S."/>
            <person name="Renesto P."/>
            <person name="Blanc G."/>
            <person name="Robert C."/>
            <person name="Fournier P.-E."/>
            <person name="Claverie J.-M."/>
            <person name="Raoult D."/>
        </authorList>
    </citation>
    <scope>NUCLEOTIDE SEQUENCE [LARGE SCALE GENOMIC DNA]</scope>
    <source>
        <strain>RML369-C</strain>
    </source>
</reference>
<accession>Q1RGR1</accession>